<protein>
    <recommendedName>
        <fullName evidence="1">6,7-dimethyl-8-ribityllumazine synthase</fullName>
        <shortName evidence="1">DMRL synthase</shortName>
        <shortName evidence="1">LS</shortName>
        <shortName evidence="1">Lumazine synthase</shortName>
        <ecNumber evidence="1">2.5.1.78</ecNumber>
    </recommendedName>
</protein>
<reference key="1">
    <citation type="journal article" date="2007" name="PLoS Genet.">
        <title>The complete genome sequence of Yersinia pseudotuberculosis IP31758, the causative agent of Far East scarlet-like fever.</title>
        <authorList>
            <person name="Eppinger M."/>
            <person name="Rosovitz M.J."/>
            <person name="Fricke W.F."/>
            <person name="Rasko D.A."/>
            <person name="Kokorina G."/>
            <person name="Fayolle C."/>
            <person name="Lindler L.E."/>
            <person name="Carniel E."/>
            <person name="Ravel J."/>
        </authorList>
    </citation>
    <scope>NUCLEOTIDE SEQUENCE [LARGE SCALE GENOMIC DNA]</scope>
    <source>
        <strain>IP 31758</strain>
    </source>
</reference>
<sequence length="156" mass="16197">MNVIEGVVATPNARVAIAIARFNNFINDSLLDGAIDALKRIGQVSDDNITVVWVPGAYELPLVANVLAKTNRYDAVIALGTVIRGGTAHFEYVAGEASSGLSSVAMNSDIPVAFGVLTTESIEQAIERAGTKAGNKGAEAALTALEMINVIKAIKG</sequence>
<evidence type="ECO:0000255" key="1">
    <source>
        <dbReference type="HAMAP-Rule" id="MF_00178"/>
    </source>
</evidence>
<gene>
    <name evidence="1" type="primary">ribH</name>
    <name type="ordered locus">YpsIP31758_3116</name>
</gene>
<feature type="chain" id="PRO_1000058373" description="6,7-dimethyl-8-ribityllumazine synthase">
    <location>
        <begin position="1"/>
        <end position="156"/>
    </location>
</feature>
<feature type="active site" description="Proton donor" evidence="1">
    <location>
        <position position="89"/>
    </location>
</feature>
<feature type="binding site" evidence="1">
    <location>
        <position position="22"/>
    </location>
    <ligand>
        <name>5-amino-6-(D-ribitylamino)uracil</name>
        <dbReference type="ChEBI" id="CHEBI:15934"/>
    </ligand>
</feature>
<feature type="binding site" evidence="1">
    <location>
        <begin position="57"/>
        <end position="59"/>
    </location>
    <ligand>
        <name>5-amino-6-(D-ribitylamino)uracil</name>
        <dbReference type="ChEBI" id="CHEBI:15934"/>
    </ligand>
</feature>
<feature type="binding site" evidence="1">
    <location>
        <begin position="81"/>
        <end position="83"/>
    </location>
    <ligand>
        <name>5-amino-6-(D-ribitylamino)uracil</name>
        <dbReference type="ChEBI" id="CHEBI:15934"/>
    </ligand>
</feature>
<feature type="binding site" evidence="1">
    <location>
        <begin position="86"/>
        <end position="87"/>
    </location>
    <ligand>
        <name>(2S)-2-hydroxy-3-oxobutyl phosphate</name>
        <dbReference type="ChEBI" id="CHEBI:58830"/>
    </ligand>
</feature>
<feature type="binding site" evidence="1">
    <location>
        <position position="114"/>
    </location>
    <ligand>
        <name>5-amino-6-(D-ribitylamino)uracil</name>
        <dbReference type="ChEBI" id="CHEBI:15934"/>
    </ligand>
</feature>
<feature type="binding site" evidence="1">
    <location>
        <position position="128"/>
    </location>
    <ligand>
        <name>(2S)-2-hydroxy-3-oxobutyl phosphate</name>
        <dbReference type="ChEBI" id="CHEBI:58830"/>
    </ligand>
</feature>
<organism>
    <name type="scientific">Yersinia pseudotuberculosis serotype O:1b (strain IP 31758)</name>
    <dbReference type="NCBI Taxonomy" id="349747"/>
    <lineage>
        <taxon>Bacteria</taxon>
        <taxon>Pseudomonadati</taxon>
        <taxon>Pseudomonadota</taxon>
        <taxon>Gammaproteobacteria</taxon>
        <taxon>Enterobacterales</taxon>
        <taxon>Yersiniaceae</taxon>
        <taxon>Yersinia</taxon>
    </lineage>
</organism>
<comment type="function">
    <text evidence="1">Catalyzes the formation of 6,7-dimethyl-8-ribityllumazine by condensation of 5-amino-6-(D-ribitylamino)uracil with 3,4-dihydroxy-2-butanone 4-phosphate. This is the penultimate step in the biosynthesis of riboflavin.</text>
</comment>
<comment type="catalytic activity">
    <reaction evidence="1">
        <text>(2S)-2-hydroxy-3-oxobutyl phosphate + 5-amino-6-(D-ribitylamino)uracil = 6,7-dimethyl-8-(1-D-ribityl)lumazine + phosphate + 2 H2O + H(+)</text>
        <dbReference type="Rhea" id="RHEA:26152"/>
        <dbReference type="ChEBI" id="CHEBI:15377"/>
        <dbReference type="ChEBI" id="CHEBI:15378"/>
        <dbReference type="ChEBI" id="CHEBI:15934"/>
        <dbReference type="ChEBI" id="CHEBI:43474"/>
        <dbReference type="ChEBI" id="CHEBI:58201"/>
        <dbReference type="ChEBI" id="CHEBI:58830"/>
        <dbReference type="EC" id="2.5.1.78"/>
    </reaction>
</comment>
<comment type="pathway">
    <text evidence="1">Cofactor biosynthesis; riboflavin biosynthesis; riboflavin from 2-hydroxy-3-oxobutyl phosphate and 5-amino-6-(D-ribitylamino)uracil: step 1/2.</text>
</comment>
<comment type="subunit">
    <text evidence="1">Forms an icosahedral capsid composed of 60 subunits, arranged as a dodecamer of pentamers.</text>
</comment>
<comment type="similarity">
    <text evidence="1">Belongs to the DMRL synthase family.</text>
</comment>
<name>RISB_YERP3</name>
<proteinExistence type="inferred from homology"/>
<dbReference type="EC" id="2.5.1.78" evidence="1"/>
<dbReference type="EMBL" id="CP000720">
    <property type="protein sequence ID" value="ABS49790.1"/>
    <property type="molecule type" value="Genomic_DNA"/>
</dbReference>
<dbReference type="SMR" id="A7FLE8"/>
<dbReference type="KEGG" id="ypi:YpsIP31758_3116"/>
<dbReference type="HOGENOM" id="CLU_089358_1_1_6"/>
<dbReference type="UniPathway" id="UPA00275">
    <property type="reaction ID" value="UER00404"/>
</dbReference>
<dbReference type="Proteomes" id="UP000002412">
    <property type="component" value="Chromosome"/>
</dbReference>
<dbReference type="GO" id="GO:0005829">
    <property type="term" value="C:cytosol"/>
    <property type="evidence" value="ECO:0007669"/>
    <property type="project" value="TreeGrafter"/>
</dbReference>
<dbReference type="GO" id="GO:0009349">
    <property type="term" value="C:riboflavin synthase complex"/>
    <property type="evidence" value="ECO:0007669"/>
    <property type="project" value="InterPro"/>
</dbReference>
<dbReference type="GO" id="GO:0000906">
    <property type="term" value="F:6,7-dimethyl-8-ribityllumazine synthase activity"/>
    <property type="evidence" value="ECO:0007669"/>
    <property type="project" value="UniProtKB-UniRule"/>
</dbReference>
<dbReference type="GO" id="GO:0009231">
    <property type="term" value="P:riboflavin biosynthetic process"/>
    <property type="evidence" value="ECO:0007669"/>
    <property type="project" value="UniProtKB-UniRule"/>
</dbReference>
<dbReference type="CDD" id="cd09209">
    <property type="entry name" value="Lumazine_synthase-I"/>
    <property type="match status" value="1"/>
</dbReference>
<dbReference type="FunFam" id="3.40.50.960:FF:000001">
    <property type="entry name" value="6,7-dimethyl-8-ribityllumazine synthase"/>
    <property type="match status" value="1"/>
</dbReference>
<dbReference type="Gene3D" id="3.40.50.960">
    <property type="entry name" value="Lumazine/riboflavin synthase"/>
    <property type="match status" value="1"/>
</dbReference>
<dbReference type="HAMAP" id="MF_00178">
    <property type="entry name" value="Lumazine_synth"/>
    <property type="match status" value="1"/>
</dbReference>
<dbReference type="InterPro" id="IPR034964">
    <property type="entry name" value="LS"/>
</dbReference>
<dbReference type="InterPro" id="IPR002180">
    <property type="entry name" value="LS/RS"/>
</dbReference>
<dbReference type="InterPro" id="IPR036467">
    <property type="entry name" value="LS/RS_sf"/>
</dbReference>
<dbReference type="NCBIfam" id="TIGR00114">
    <property type="entry name" value="lumazine-synth"/>
    <property type="match status" value="1"/>
</dbReference>
<dbReference type="NCBIfam" id="NF000812">
    <property type="entry name" value="PRK00061.1-4"/>
    <property type="match status" value="1"/>
</dbReference>
<dbReference type="PANTHER" id="PTHR21058:SF0">
    <property type="entry name" value="6,7-DIMETHYL-8-RIBITYLLUMAZINE SYNTHASE"/>
    <property type="match status" value="1"/>
</dbReference>
<dbReference type="PANTHER" id="PTHR21058">
    <property type="entry name" value="6,7-DIMETHYL-8-RIBITYLLUMAZINE SYNTHASE DMRL SYNTHASE LUMAZINE SYNTHASE"/>
    <property type="match status" value="1"/>
</dbReference>
<dbReference type="Pfam" id="PF00885">
    <property type="entry name" value="DMRL_synthase"/>
    <property type="match status" value="1"/>
</dbReference>
<dbReference type="SUPFAM" id="SSF52121">
    <property type="entry name" value="Lumazine synthase"/>
    <property type="match status" value="1"/>
</dbReference>
<accession>A7FLE8</accession>
<keyword id="KW-0686">Riboflavin biosynthesis</keyword>
<keyword id="KW-0808">Transferase</keyword>